<evidence type="ECO:0000250" key="1"/>
<evidence type="ECO:0000250" key="2">
    <source>
        <dbReference type="UniProtKB" id="Q9ZW27"/>
    </source>
</evidence>
<evidence type="ECO:0000305" key="3"/>
<proteinExistence type="evidence at transcript level"/>
<comment type="function">
    <text evidence="1">May be involved in the conjugation of reduced glutathione to a wide number of exogenous and endogenous hydrophobic electrophiles and have a detoxification role against certain herbicides.</text>
</comment>
<comment type="catalytic activity">
    <reaction>
        <text>RX + glutathione = an S-substituted glutathione + a halide anion + H(+)</text>
        <dbReference type="Rhea" id="RHEA:16437"/>
        <dbReference type="ChEBI" id="CHEBI:15378"/>
        <dbReference type="ChEBI" id="CHEBI:16042"/>
        <dbReference type="ChEBI" id="CHEBI:17792"/>
        <dbReference type="ChEBI" id="CHEBI:57925"/>
        <dbReference type="ChEBI" id="CHEBI:90779"/>
        <dbReference type="EC" id="2.5.1.18"/>
    </reaction>
</comment>
<comment type="subcellular location">
    <subcellularLocation>
        <location evidence="3">Cytoplasm</location>
        <location evidence="3">Cytosol</location>
    </subcellularLocation>
</comment>
<comment type="similarity">
    <text evidence="3">Belongs to the GST superfamily. Tau family.</text>
</comment>
<comment type="sequence caution" evidence="3">
    <conflict type="erroneous gene model prediction">
        <sequence resource="EMBL-CDS" id="AAF79859"/>
    </conflict>
    <text>The predicted gene At1g27130 has been split into 2 genes: At1g27130 and At1g27140.</text>
</comment>
<gene>
    <name type="primary">GSTU14</name>
    <name type="synonym">GST13</name>
    <name type="ordered locus">At1g27140</name>
    <name type="ORF">T7N9.20</name>
</gene>
<accession>Q9FUT1</accession>
<accession>Q9LFX4</accession>
<organism>
    <name type="scientific">Arabidopsis thaliana</name>
    <name type="common">Mouse-ear cress</name>
    <dbReference type="NCBI Taxonomy" id="3702"/>
    <lineage>
        <taxon>Eukaryota</taxon>
        <taxon>Viridiplantae</taxon>
        <taxon>Streptophyta</taxon>
        <taxon>Embryophyta</taxon>
        <taxon>Tracheophyta</taxon>
        <taxon>Spermatophyta</taxon>
        <taxon>Magnoliopsida</taxon>
        <taxon>eudicotyledons</taxon>
        <taxon>Gunneridae</taxon>
        <taxon>Pentapetalae</taxon>
        <taxon>rosids</taxon>
        <taxon>malvids</taxon>
        <taxon>Brassicales</taxon>
        <taxon>Brassicaceae</taxon>
        <taxon>Camelineae</taxon>
        <taxon>Arabidopsis</taxon>
    </lineage>
</organism>
<reference key="1">
    <citation type="journal article" date="2002" name="Plant Mol. Biol.">
        <title>Probing the diversity of the Arabidopsis glutathione S-transferase gene family.</title>
        <authorList>
            <person name="Wagner U."/>
            <person name="Edwards R."/>
            <person name="Dixon D.P."/>
            <person name="Mauch F."/>
        </authorList>
    </citation>
    <scope>NUCLEOTIDE SEQUENCE [MRNA]</scope>
    <scope>GENE FAMILY</scope>
    <scope>NOMENCLATURE</scope>
    <source>
        <strain>cv. Columbia</strain>
    </source>
</reference>
<reference key="2">
    <citation type="journal article" date="2000" name="Nature">
        <title>Sequence and analysis of chromosome 1 of the plant Arabidopsis thaliana.</title>
        <authorList>
            <person name="Theologis A."/>
            <person name="Ecker J.R."/>
            <person name="Palm C.J."/>
            <person name="Federspiel N.A."/>
            <person name="Kaul S."/>
            <person name="White O."/>
            <person name="Alonso J."/>
            <person name="Altafi H."/>
            <person name="Araujo R."/>
            <person name="Bowman C.L."/>
            <person name="Brooks S.Y."/>
            <person name="Buehler E."/>
            <person name="Chan A."/>
            <person name="Chao Q."/>
            <person name="Chen H."/>
            <person name="Cheuk R.F."/>
            <person name="Chin C.W."/>
            <person name="Chung M.K."/>
            <person name="Conn L."/>
            <person name="Conway A.B."/>
            <person name="Conway A.R."/>
            <person name="Creasy T.H."/>
            <person name="Dewar K."/>
            <person name="Dunn P."/>
            <person name="Etgu P."/>
            <person name="Feldblyum T.V."/>
            <person name="Feng J.-D."/>
            <person name="Fong B."/>
            <person name="Fujii C.Y."/>
            <person name="Gill J.E."/>
            <person name="Goldsmith A.D."/>
            <person name="Haas B."/>
            <person name="Hansen N.F."/>
            <person name="Hughes B."/>
            <person name="Huizar L."/>
            <person name="Hunter J.L."/>
            <person name="Jenkins J."/>
            <person name="Johnson-Hopson C."/>
            <person name="Khan S."/>
            <person name="Khaykin E."/>
            <person name="Kim C.J."/>
            <person name="Koo H.L."/>
            <person name="Kremenetskaia I."/>
            <person name="Kurtz D.B."/>
            <person name="Kwan A."/>
            <person name="Lam B."/>
            <person name="Langin-Hooper S."/>
            <person name="Lee A."/>
            <person name="Lee J.M."/>
            <person name="Lenz C.A."/>
            <person name="Li J.H."/>
            <person name="Li Y.-P."/>
            <person name="Lin X."/>
            <person name="Liu S.X."/>
            <person name="Liu Z.A."/>
            <person name="Luros J.S."/>
            <person name="Maiti R."/>
            <person name="Marziali A."/>
            <person name="Militscher J."/>
            <person name="Miranda M."/>
            <person name="Nguyen M."/>
            <person name="Nierman W.C."/>
            <person name="Osborne B.I."/>
            <person name="Pai G."/>
            <person name="Peterson J."/>
            <person name="Pham P.K."/>
            <person name="Rizzo M."/>
            <person name="Rooney T."/>
            <person name="Rowley D."/>
            <person name="Sakano H."/>
            <person name="Salzberg S.L."/>
            <person name="Schwartz J.R."/>
            <person name="Shinn P."/>
            <person name="Southwick A.M."/>
            <person name="Sun H."/>
            <person name="Tallon L.J."/>
            <person name="Tambunga G."/>
            <person name="Toriumi M.J."/>
            <person name="Town C.D."/>
            <person name="Utterback T."/>
            <person name="Van Aken S."/>
            <person name="Vaysberg M."/>
            <person name="Vysotskaia V.S."/>
            <person name="Walker M."/>
            <person name="Wu D."/>
            <person name="Yu G."/>
            <person name="Fraser C.M."/>
            <person name="Venter J.C."/>
            <person name="Davis R.W."/>
        </authorList>
    </citation>
    <scope>NUCLEOTIDE SEQUENCE [LARGE SCALE GENOMIC DNA]</scope>
    <source>
        <strain>cv. Columbia</strain>
    </source>
</reference>
<reference key="3">
    <citation type="journal article" date="2017" name="Plant J.">
        <title>Araport11: a complete reannotation of the Arabidopsis thaliana reference genome.</title>
        <authorList>
            <person name="Cheng C.Y."/>
            <person name="Krishnakumar V."/>
            <person name="Chan A.P."/>
            <person name="Thibaud-Nissen F."/>
            <person name="Schobel S."/>
            <person name="Town C.D."/>
        </authorList>
    </citation>
    <scope>GENOME REANNOTATION</scope>
    <source>
        <strain>cv. Columbia</strain>
    </source>
</reference>
<reference key="4">
    <citation type="submission" date="2006-03" db="EMBL/GenBank/DDBJ databases">
        <title>Arabidopsis ORF clones.</title>
        <authorList>
            <person name="Kim C.J."/>
            <person name="Chen H."/>
            <person name="Shinn P."/>
            <person name="Ecker J.R."/>
        </authorList>
    </citation>
    <scope>NUCLEOTIDE SEQUENCE [LARGE SCALE MRNA]</scope>
    <source>
        <strain>cv. Columbia</strain>
    </source>
</reference>
<protein>
    <recommendedName>
        <fullName>Glutathione S-transferase U14</fullName>
        <shortName>AtGSTU14</shortName>
        <ecNumber>2.5.1.18</ecNumber>
    </recommendedName>
    <alternativeName>
        <fullName>GST class-tau member 14</fullName>
    </alternativeName>
    <alternativeName>
        <fullName>Glutathione S-transferase 13</fullName>
    </alternativeName>
</protein>
<dbReference type="EC" id="2.5.1.18"/>
<dbReference type="EMBL" id="AF288178">
    <property type="protein sequence ID" value="AAG30127.1"/>
    <property type="molecule type" value="mRNA"/>
</dbReference>
<dbReference type="EMBL" id="AC000348">
    <property type="protein sequence ID" value="AAF79859.1"/>
    <property type="status" value="ALT_SEQ"/>
    <property type="molecule type" value="Genomic_DNA"/>
</dbReference>
<dbReference type="EMBL" id="CP002684">
    <property type="protein sequence ID" value="AEE30786.1"/>
    <property type="molecule type" value="Genomic_DNA"/>
</dbReference>
<dbReference type="EMBL" id="BT024850">
    <property type="protein sequence ID" value="ABD60733.1"/>
    <property type="molecule type" value="mRNA"/>
</dbReference>
<dbReference type="RefSeq" id="NP_174034.1">
    <property type="nucleotide sequence ID" value="NM_102476.4"/>
</dbReference>
<dbReference type="SMR" id="Q9FUT1"/>
<dbReference type="FunCoup" id="Q9FUT1">
    <property type="interactions" value="101"/>
</dbReference>
<dbReference type="STRING" id="3702.Q9FUT1"/>
<dbReference type="PaxDb" id="3702-AT1G27140.1"/>
<dbReference type="ProteomicsDB" id="247339"/>
<dbReference type="EnsemblPlants" id="AT1G27140.1">
    <property type="protein sequence ID" value="AT1G27140.1"/>
    <property type="gene ID" value="AT1G27140"/>
</dbReference>
<dbReference type="GeneID" id="839603"/>
<dbReference type="Gramene" id="AT1G27140.1">
    <property type="protein sequence ID" value="AT1G27140.1"/>
    <property type="gene ID" value="AT1G27140"/>
</dbReference>
<dbReference type="KEGG" id="ath:AT1G27140"/>
<dbReference type="Araport" id="AT1G27140"/>
<dbReference type="TAIR" id="AT1G27140">
    <property type="gene designation" value="GSTU14"/>
</dbReference>
<dbReference type="eggNOG" id="KOG0406">
    <property type="taxonomic scope" value="Eukaryota"/>
</dbReference>
<dbReference type="HOGENOM" id="CLU_011226_18_0_1"/>
<dbReference type="InParanoid" id="Q9FUT1"/>
<dbReference type="OrthoDB" id="202840at2759"/>
<dbReference type="PhylomeDB" id="Q9FUT1"/>
<dbReference type="BioCyc" id="ARA:AT1G27140-MONOMER"/>
<dbReference type="PRO" id="PR:Q9FUT1"/>
<dbReference type="Proteomes" id="UP000006548">
    <property type="component" value="Chromosome 1"/>
</dbReference>
<dbReference type="ExpressionAtlas" id="Q9FUT1">
    <property type="expression patterns" value="baseline and differential"/>
</dbReference>
<dbReference type="GO" id="GO:0005737">
    <property type="term" value="C:cytoplasm"/>
    <property type="evidence" value="ECO:0000303"/>
    <property type="project" value="TAIR"/>
</dbReference>
<dbReference type="GO" id="GO:0005829">
    <property type="term" value="C:cytosol"/>
    <property type="evidence" value="ECO:0007669"/>
    <property type="project" value="UniProtKB-SubCell"/>
</dbReference>
<dbReference type="GO" id="GO:0004364">
    <property type="term" value="F:glutathione transferase activity"/>
    <property type="evidence" value="ECO:0000314"/>
    <property type="project" value="TAIR"/>
</dbReference>
<dbReference type="GO" id="GO:0006749">
    <property type="term" value="P:glutathione metabolic process"/>
    <property type="evidence" value="ECO:0000314"/>
    <property type="project" value="TAIR"/>
</dbReference>
<dbReference type="GO" id="GO:0009407">
    <property type="term" value="P:toxin catabolic process"/>
    <property type="evidence" value="ECO:0000304"/>
    <property type="project" value="TAIR"/>
</dbReference>
<dbReference type="CDD" id="cd03185">
    <property type="entry name" value="GST_C_Tau"/>
    <property type="match status" value="1"/>
</dbReference>
<dbReference type="CDD" id="cd03058">
    <property type="entry name" value="GST_N_Tau"/>
    <property type="match status" value="1"/>
</dbReference>
<dbReference type="FunFam" id="3.40.30.10:FF:000044">
    <property type="entry name" value="Glutathione S-transferase GSTU6"/>
    <property type="match status" value="1"/>
</dbReference>
<dbReference type="FunFam" id="1.20.1050.10:FF:000016">
    <property type="entry name" value="Glutathione S-transferase U9"/>
    <property type="match status" value="1"/>
</dbReference>
<dbReference type="Gene3D" id="1.20.1050.10">
    <property type="match status" value="1"/>
</dbReference>
<dbReference type="Gene3D" id="3.40.30.10">
    <property type="entry name" value="Glutaredoxin"/>
    <property type="match status" value="1"/>
</dbReference>
<dbReference type="InterPro" id="IPR010987">
    <property type="entry name" value="Glutathione-S-Trfase_C-like"/>
</dbReference>
<dbReference type="InterPro" id="IPR036282">
    <property type="entry name" value="Glutathione-S-Trfase_C_sf"/>
</dbReference>
<dbReference type="InterPro" id="IPR040079">
    <property type="entry name" value="Glutathione_S-Trfase"/>
</dbReference>
<dbReference type="InterPro" id="IPR004045">
    <property type="entry name" value="Glutathione_S-Trfase_N"/>
</dbReference>
<dbReference type="InterPro" id="IPR045074">
    <property type="entry name" value="GST_C_Tau"/>
</dbReference>
<dbReference type="InterPro" id="IPR045073">
    <property type="entry name" value="Omega/Tau-like"/>
</dbReference>
<dbReference type="InterPro" id="IPR036249">
    <property type="entry name" value="Thioredoxin-like_sf"/>
</dbReference>
<dbReference type="PANTHER" id="PTHR11260:SF632">
    <property type="entry name" value="GLUTATHIONE S-TRANSFERASE U13-RELATED"/>
    <property type="match status" value="1"/>
</dbReference>
<dbReference type="PANTHER" id="PTHR11260">
    <property type="entry name" value="GLUTATHIONE S-TRANSFERASE, GST, SUPERFAMILY, GST DOMAIN CONTAINING"/>
    <property type="match status" value="1"/>
</dbReference>
<dbReference type="Pfam" id="PF02798">
    <property type="entry name" value="GST_N"/>
    <property type="match status" value="1"/>
</dbReference>
<dbReference type="SFLD" id="SFLDS00019">
    <property type="entry name" value="Glutathione_Transferase_(cytos"/>
    <property type="match status" value="1"/>
</dbReference>
<dbReference type="SFLD" id="SFLDG01152">
    <property type="entry name" value="Main.3:_Omega-_and_Tau-like"/>
    <property type="match status" value="1"/>
</dbReference>
<dbReference type="SUPFAM" id="SSF47616">
    <property type="entry name" value="GST C-terminal domain-like"/>
    <property type="match status" value="1"/>
</dbReference>
<dbReference type="SUPFAM" id="SSF52833">
    <property type="entry name" value="Thioredoxin-like"/>
    <property type="match status" value="1"/>
</dbReference>
<dbReference type="PROSITE" id="PS50405">
    <property type="entry name" value="GST_CTER"/>
    <property type="match status" value="1"/>
</dbReference>
<dbReference type="PROSITE" id="PS50404">
    <property type="entry name" value="GST_NTER"/>
    <property type="match status" value="1"/>
</dbReference>
<name>GSTUE_ARATH</name>
<keyword id="KW-0963">Cytoplasm</keyword>
<keyword id="KW-0216">Detoxification</keyword>
<keyword id="KW-0597">Phosphoprotein</keyword>
<keyword id="KW-1185">Reference proteome</keyword>
<keyword id="KW-0808">Transferase</keyword>
<feature type="chain" id="PRO_0000413560" description="Glutathione S-transferase U14">
    <location>
        <begin position="1"/>
        <end position="243"/>
    </location>
</feature>
<feature type="domain" description="GST N-terminal">
    <location>
        <begin position="5"/>
        <end position="87"/>
    </location>
</feature>
<feature type="domain" description="GST C-terminal">
    <location>
        <begin position="93"/>
        <end position="220"/>
    </location>
</feature>
<feature type="binding site" evidence="1">
    <location>
        <begin position="15"/>
        <end position="16"/>
    </location>
    <ligand>
        <name>glutathione</name>
        <dbReference type="ChEBI" id="CHEBI:57925"/>
    </ligand>
</feature>
<feature type="binding site" evidence="1">
    <location>
        <begin position="44"/>
        <end position="45"/>
    </location>
    <ligand>
        <name>glutathione</name>
        <dbReference type="ChEBI" id="CHEBI:57925"/>
    </ligand>
</feature>
<feature type="binding site" evidence="1">
    <location>
        <begin position="58"/>
        <end position="59"/>
    </location>
    <ligand>
        <name>glutathione</name>
        <dbReference type="ChEBI" id="CHEBI:57925"/>
    </ligand>
</feature>
<feature type="binding site" evidence="1">
    <location>
        <begin position="71"/>
        <end position="72"/>
    </location>
    <ligand>
        <name>glutathione</name>
        <dbReference type="ChEBI" id="CHEBI:57925"/>
    </ligand>
</feature>
<feature type="modified residue" description="Phosphothreonine" evidence="2">
    <location>
        <position position="159"/>
    </location>
</feature>
<sequence length="243" mass="27229">MAQNDTVKLIGCSDDPFSIRPRVALHLKSIKYEYLEEPDDDLGEKSQLLLKSNPIHKKTPVLIHGDLAICESLNIVQYLDEAWPSDPSILPSNAYDRASARFWAQYIDDKCFEAANALTGANNDEERIAATGKLTECLAILEETFQKSSKGLGFFGGETIGYLDIACAALLGPISVIEMFSADKFVREETTPGLIQWAVRFRAHEAVRPYMPTVEEVTELVKQRIEEGFKRNFKSNVSTSEYE</sequence>